<protein>
    <recommendedName>
        <fullName>Adhesion G protein-coupled receptor E1</fullName>
    </recommendedName>
    <alternativeName>
        <fullName>Cell surface glycoprotein F4/80</fullName>
    </alternativeName>
    <alternativeName>
        <fullName>EGF-like module receptor 1</fullName>
    </alternativeName>
    <alternativeName>
        <fullName>EGF-like module-containing mucin-like hormone receptor-like 1</fullName>
    </alternativeName>
    <alternativeName>
        <fullName>EMR1 hormone receptor</fullName>
    </alternativeName>
</protein>
<feature type="signal peptide" evidence="2">
    <location>
        <begin position="1"/>
        <end position="27"/>
    </location>
</feature>
<feature type="chain" id="PRO_0000012874" description="Adhesion G protein-coupled receptor E1">
    <location>
        <begin position="28"/>
        <end position="931"/>
    </location>
</feature>
<feature type="topological domain" description="Extracellular" evidence="6">
    <location>
        <begin position="28"/>
        <end position="644"/>
    </location>
</feature>
<feature type="transmembrane region" description="Helical; Name=1" evidence="2">
    <location>
        <begin position="645"/>
        <end position="672"/>
    </location>
</feature>
<feature type="topological domain" description="Cytoplasmic" evidence="6">
    <location>
        <begin position="673"/>
        <end position="679"/>
    </location>
</feature>
<feature type="transmembrane region" description="Helical; Name=2" evidence="2">
    <location>
        <begin position="680"/>
        <end position="701"/>
    </location>
</feature>
<feature type="topological domain" description="Extracellular" evidence="6">
    <location>
        <begin position="702"/>
        <end position="711"/>
    </location>
</feature>
<feature type="transmembrane region" description="Helical; Name=3" evidence="2">
    <location>
        <begin position="712"/>
        <end position="735"/>
    </location>
</feature>
<feature type="topological domain" description="Cytoplasmic" evidence="6">
    <location>
        <begin position="736"/>
        <end position="754"/>
    </location>
</feature>
<feature type="transmembrane region" description="Helical; Name=4" evidence="2">
    <location>
        <begin position="755"/>
        <end position="776"/>
    </location>
</feature>
<feature type="topological domain" description="Extracellular" evidence="6">
    <location>
        <begin position="777"/>
        <end position="792"/>
    </location>
</feature>
<feature type="transmembrane region" description="Helical; Name=5" evidence="2">
    <location>
        <begin position="793"/>
        <end position="821"/>
    </location>
</feature>
<feature type="topological domain" description="Cytoplasmic" evidence="6">
    <location>
        <begin position="822"/>
        <end position="839"/>
    </location>
</feature>
<feature type="transmembrane region" description="Helical; Name=6" evidence="2">
    <location>
        <begin position="840"/>
        <end position="859"/>
    </location>
</feature>
<feature type="topological domain" description="Extracellular" evidence="6">
    <location>
        <begin position="860"/>
        <end position="874"/>
    </location>
</feature>
<feature type="transmembrane region" description="Helical; Name=7" evidence="2">
    <location>
        <begin position="875"/>
        <end position="897"/>
    </location>
</feature>
<feature type="topological domain" description="Cytoplasmic" evidence="6">
    <location>
        <begin position="898"/>
        <end position="931"/>
    </location>
</feature>
<feature type="domain" description="EGF-like 1" evidence="3">
    <location>
        <begin position="32"/>
        <end position="80"/>
    </location>
</feature>
<feature type="domain" description="EGF-like 2" evidence="3">
    <location>
        <begin position="81"/>
        <end position="132"/>
    </location>
</feature>
<feature type="domain" description="EGF-like 3; calcium-binding" evidence="3">
    <location>
        <begin position="133"/>
        <end position="172"/>
    </location>
</feature>
<feature type="domain" description="EGF-like 4; calcium-binding" evidence="3">
    <location>
        <begin position="173"/>
        <end position="221"/>
    </location>
</feature>
<feature type="domain" description="EGF-like 5; calcium-binding" evidence="3">
    <location>
        <begin position="222"/>
        <end position="271"/>
    </location>
</feature>
<feature type="domain" description="EGF-like 6; calcium-binding" evidence="3">
    <location>
        <begin position="272"/>
        <end position="318"/>
    </location>
</feature>
<feature type="domain" description="EGF-like 7; calcium-binding" evidence="3">
    <location>
        <begin position="319"/>
        <end position="367"/>
    </location>
</feature>
<feature type="domain" description="GAIN-B" evidence="4">
    <location>
        <begin position="482"/>
        <end position="642"/>
    </location>
</feature>
<feature type="region of interest" description="GPS" evidence="4">
    <location>
        <begin position="595"/>
        <end position="642"/>
    </location>
</feature>
<feature type="short sequence motif" description="Cell attachment site" evidence="2">
    <location>
        <begin position="506"/>
        <end position="508"/>
    </location>
</feature>
<feature type="glycosylation site" description="N-linked (GlcNAc...) asparagine" evidence="2">
    <location>
        <position position="148"/>
    </location>
</feature>
<feature type="glycosylation site" description="N-linked (GlcNAc...) asparagine" evidence="2">
    <location>
        <position position="167"/>
    </location>
</feature>
<feature type="glycosylation site" description="N-linked (GlcNAc...) asparagine" evidence="2">
    <location>
        <position position="229"/>
    </location>
</feature>
<feature type="glycosylation site" description="N-linked (GlcNAc...) asparagine" evidence="2">
    <location>
        <position position="269"/>
    </location>
</feature>
<feature type="glycosylation site" description="N-linked (GlcNAc...) asparagine" evidence="2">
    <location>
        <position position="283"/>
    </location>
</feature>
<feature type="glycosylation site" description="N-linked (GlcNAc...) asparagine" evidence="2">
    <location>
        <position position="405"/>
    </location>
</feature>
<feature type="glycosylation site" description="N-linked (GlcNAc...) asparagine" evidence="2">
    <location>
        <position position="417"/>
    </location>
</feature>
<feature type="glycosylation site" description="N-linked (GlcNAc...) asparagine" evidence="2">
    <location>
        <position position="474"/>
    </location>
</feature>
<feature type="glycosylation site" description="N-linked (GlcNAc...) asparagine" evidence="2">
    <location>
        <position position="498"/>
    </location>
</feature>
<feature type="glycosylation site" description="N-linked (GlcNAc...) asparagine" evidence="2">
    <location>
        <position position="706"/>
    </location>
</feature>
<feature type="disulfide bond" evidence="3">
    <location>
        <begin position="36"/>
        <end position="48"/>
    </location>
</feature>
<feature type="disulfide bond" evidence="3">
    <location>
        <begin position="42"/>
        <end position="57"/>
    </location>
</feature>
<feature type="disulfide bond" evidence="3">
    <location>
        <begin position="59"/>
        <end position="79"/>
    </location>
</feature>
<feature type="disulfide bond" evidence="3">
    <location>
        <begin position="85"/>
        <end position="98"/>
    </location>
</feature>
<feature type="disulfide bond" evidence="3">
    <location>
        <begin position="92"/>
        <end position="107"/>
    </location>
</feature>
<feature type="disulfide bond" evidence="3">
    <location>
        <begin position="109"/>
        <end position="131"/>
    </location>
</feature>
<feature type="disulfide bond" evidence="3">
    <location>
        <begin position="137"/>
        <end position="149"/>
    </location>
</feature>
<feature type="disulfide bond" evidence="3">
    <location>
        <begin position="143"/>
        <end position="158"/>
    </location>
</feature>
<feature type="disulfide bond" evidence="3">
    <location>
        <begin position="160"/>
        <end position="171"/>
    </location>
</feature>
<feature type="disulfide bond" evidence="3">
    <location>
        <begin position="177"/>
        <end position="189"/>
    </location>
</feature>
<feature type="disulfide bond" evidence="3">
    <location>
        <begin position="183"/>
        <end position="198"/>
    </location>
</feature>
<feature type="disulfide bond" evidence="3">
    <location>
        <begin position="200"/>
        <end position="220"/>
    </location>
</feature>
<feature type="disulfide bond" evidence="3">
    <location>
        <begin position="226"/>
        <end position="239"/>
    </location>
</feature>
<feature type="disulfide bond" evidence="3">
    <location>
        <begin position="233"/>
        <end position="248"/>
    </location>
</feature>
<feature type="disulfide bond" evidence="3">
    <location>
        <begin position="250"/>
        <end position="270"/>
    </location>
</feature>
<feature type="disulfide bond" evidence="3">
    <location>
        <begin position="276"/>
        <end position="286"/>
    </location>
</feature>
<feature type="disulfide bond" evidence="3">
    <location>
        <begin position="280"/>
        <end position="295"/>
    </location>
</feature>
<feature type="disulfide bond" evidence="3">
    <location>
        <begin position="297"/>
        <end position="317"/>
    </location>
</feature>
<feature type="disulfide bond" evidence="3">
    <location>
        <begin position="323"/>
        <end position="336"/>
    </location>
</feature>
<feature type="disulfide bond" evidence="3">
    <location>
        <begin position="330"/>
        <end position="345"/>
    </location>
</feature>
<feature type="disulfide bond" evidence="3">
    <location>
        <begin position="347"/>
        <end position="366"/>
    </location>
</feature>
<feature type="disulfide bond" evidence="4">
    <location>
        <begin position="595"/>
        <end position="624"/>
    </location>
</feature>
<feature type="disulfide bond" evidence="4">
    <location>
        <begin position="612"/>
        <end position="626"/>
    </location>
</feature>
<gene>
    <name type="primary">Adgre1</name>
    <name type="synonym">Emr1</name>
    <name type="synonym">Gpf480</name>
</gene>
<organism>
    <name type="scientific">Mus musculus</name>
    <name type="common">Mouse</name>
    <dbReference type="NCBI Taxonomy" id="10090"/>
    <lineage>
        <taxon>Eukaryota</taxon>
        <taxon>Metazoa</taxon>
        <taxon>Chordata</taxon>
        <taxon>Craniata</taxon>
        <taxon>Vertebrata</taxon>
        <taxon>Euteleostomi</taxon>
        <taxon>Mammalia</taxon>
        <taxon>Eutheria</taxon>
        <taxon>Euarchontoglires</taxon>
        <taxon>Glires</taxon>
        <taxon>Rodentia</taxon>
        <taxon>Myomorpha</taxon>
        <taxon>Muroidea</taxon>
        <taxon>Muridae</taxon>
        <taxon>Murinae</taxon>
        <taxon>Mus</taxon>
        <taxon>Mus</taxon>
    </lineage>
</organism>
<dbReference type="EMBL" id="X93328">
    <property type="protein sequence ID" value="CAA63720.1"/>
    <property type="molecule type" value="mRNA"/>
</dbReference>
<dbReference type="EMBL" id="U66888">
    <property type="protein sequence ID" value="AAC53184.1"/>
    <property type="molecule type" value="mRNA"/>
</dbReference>
<dbReference type="EMBL" id="BC075688">
    <property type="protein sequence ID" value="AAH75688.1"/>
    <property type="molecule type" value="mRNA"/>
</dbReference>
<dbReference type="CCDS" id="CCDS50160.1"/>
<dbReference type="RefSeq" id="NP_001342651.1">
    <property type="nucleotide sequence ID" value="NM_001355722.2"/>
</dbReference>
<dbReference type="RefSeq" id="NP_034260.1">
    <property type="nucleotide sequence ID" value="NM_010130.5"/>
</dbReference>
<dbReference type="RefSeq" id="XP_006523664.1">
    <property type="nucleotide sequence ID" value="XM_006523601.1"/>
</dbReference>
<dbReference type="SMR" id="Q61549"/>
<dbReference type="BioGRID" id="199441">
    <property type="interactions" value="2"/>
</dbReference>
<dbReference type="FunCoup" id="Q61549">
    <property type="interactions" value="146"/>
</dbReference>
<dbReference type="IntAct" id="Q61549">
    <property type="interactions" value="1"/>
</dbReference>
<dbReference type="MINT" id="Q61549"/>
<dbReference type="STRING" id="10090.ENSMUSP00000083971"/>
<dbReference type="MEROPS" id="P02.951"/>
<dbReference type="GlyCosmos" id="Q61549">
    <property type="glycosylation" value="10 sites, No reported glycans"/>
</dbReference>
<dbReference type="GlyGen" id="Q61549">
    <property type="glycosylation" value="10 sites, 1 N-linked glycan (1 site)"/>
</dbReference>
<dbReference type="iPTMnet" id="Q61549"/>
<dbReference type="PhosphoSitePlus" id="Q61549"/>
<dbReference type="PaxDb" id="10090-ENSMUSP00000083971"/>
<dbReference type="ProteomicsDB" id="296129"/>
<dbReference type="Antibodypedia" id="11973">
    <property type="antibodies" value="765 antibodies from 43 providers"/>
</dbReference>
<dbReference type="DNASU" id="13733"/>
<dbReference type="Ensembl" id="ENSMUST00000004850.8">
    <property type="protein sequence ID" value="ENSMUSP00000004850.8"/>
    <property type="gene ID" value="ENSMUSG00000004730.16"/>
</dbReference>
<dbReference type="Ensembl" id="ENSMUST00000086763.13">
    <property type="protein sequence ID" value="ENSMUSP00000083971.6"/>
    <property type="gene ID" value="ENSMUSG00000004730.16"/>
</dbReference>
<dbReference type="GeneID" id="13733"/>
<dbReference type="KEGG" id="mmu:13733"/>
<dbReference type="UCSC" id="uc008det.2">
    <property type="organism name" value="mouse"/>
</dbReference>
<dbReference type="AGR" id="MGI:106912"/>
<dbReference type="CTD" id="2015"/>
<dbReference type="MGI" id="MGI:106912">
    <property type="gene designation" value="Adgre1"/>
</dbReference>
<dbReference type="VEuPathDB" id="HostDB:ENSMUSG00000004730"/>
<dbReference type="eggNOG" id="KOG4193">
    <property type="taxonomic scope" value="Eukaryota"/>
</dbReference>
<dbReference type="GeneTree" id="ENSGT00940000161354"/>
<dbReference type="HOGENOM" id="CLU_002753_3_7_1"/>
<dbReference type="InParanoid" id="Q61549"/>
<dbReference type="OMA" id="PGRFICT"/>
<dbReference type="OrthoDB" id="1100386at2759"/>
<dbReference type="PhylomeDB" id="Q61549"/>
<dbReference type="TreeFam" id="TF316380"/>
<dbReference type="Reactome" id="R-MMU-373080">
    <property type="pathway name" value="Class B/2 (Secretin family receptors)"/>
</dbReference>
<dbReference type="BioGRID-ORCS" id="13733">
    <property type="hits" value="0 hits in 76 CRISPR screens"/>
</dbReference>
<dbReference type="ChiTaRS" id="Adgre1">
    <property type="organism name" value="mouse"/>
</dbReference>
<dbReference type="PRO" id="PR:Q61549"/>
<dbReference type="Proteomes" id="UP000000589">
    <property type="component" value="Chromosome 17"/>
</dbReference>
<dbReference type="RNAct" id="Q61549">
    <property type="molecule type" value="protein"/>
</dbReference>
<dbReference type="Bgee" id="ENSMUSG00000004730">
    <property type="expression patterns" value="Expressed in stroma of bone marrow and 225 other cell types or tissues"/>
</dbReference>
<dbReference type="ExpressionAtlas" id="Q61549">
    <property type="expression patterns" value="baseline and differential"/>
</dbReference>
<dbReference type="GO" id="GO:0071944">
    <property type="term" value="C:cell periphery"/>
    <property type="evidence" value="ECO:0000314"/>
    <property type="project" value="MGI"/>
</dbReference>
<dbReference type="GO" id="GO:0009897">
    <property type="term" value="C:external side of plasma membrane"/>
    <property type="evidence" value="ECO:0000314"/>
    <property type="project" value="MGI"/>
</dbReference>
<dbReference type="GO" id="GO:0005886">
    <property type="term" value="C:plasma membrane"/>
    <property type="evidence" value="ECO:0000314"/>
    <property type="project" value="MGI"/>
</dbReference>
<dbReference type="GO" id="GO:0005509">
    <property type="term" value="F:calcium ion binding"/>
    <property type="evidence" value="ECO:0007669"/>
    <property type="project" value="InterPro"/>
</dbReference>
<dbReference type="GO" id="GO:0004930">
    <property type="term" value="F:G protein-coupled receptor activity"/>
    <property type="evidence" value="ECO:0007669"/>
    <property type="project" value="UniProtKB-KW"/>
</dbReference>
<dbReference type="GO" id="GO:0002250">
    <property type="term" value="P:adaptive immune response"/>
    <property type="evidence" value="ECO:0007669"/>
    <property type="project" value="UniProtKB-KW"/>
</dbReference>
<dbReference type="GO" id="GO:0007166">
    <property type="term" value="P:cell surface receptor signaling pathway"/>
    <property type="evidence" value="ECO:0007669"/>
    <property type="project" value="InterPro"/>
</dbReference>
<dbReference type="CDD" id="cd15439">
    <property type="entry name" value="7tmB2_EMR"/>
    <property type="match status" value="1"/>
</dbReference>
<dbReference type="CDD" id="cd00054">
    <property type="entry name" value="EGF_CA"/>
    <property type="match status" value="7"/>
</dbReference>
<dbReference type="FunFam" id="2.10.25.10:FF:000243">
    <property type="entry name" value="Adhesion G protein-coupled receptor E1"/>
    <property type="match status" value="1"/>
</dbReference>
<dbReference type="FunFam" id="2.10.25.10:FF:000464">
    <property type="entry name" value="Adhesion G protein-coupled receptor E1"/>
    <property type="match status" value="1"/>
</dbReference>
<dbReference type="FunFam" id="2.10.25.10:FF:000506">
    <property type="entry name" value="Adhesion G protein-coupled receptor E1"/>
    <property type="match status" value="1"/>
</dbReference>
<dbReference type="FunFam" id="2.60.220.50:FF:000013">
    <property type="entry name" value="Adhesion G protein-coupled receptor E1"/>
    <property type="match status" value="1"/>
</dbReference>
<dbReference type="FunFam" id="1.20.1070.10:FF:000054">
    <property type="entry name" value="Adhesion G protein-coupled receptor E3"/>
    <property type="match status" value="1"/>
</dbReference>
<dbReference type="FunFam" id="2.10.25.10:FF:000005">
    <property type="entry name" value="Fibrillin 2"/>
    <property type="match status" value="1"/>
</dbReference>
<dbReference type="FunFam" id="2.10.25.10:FF:000038">
    <property type="entry name" value="Fibrillin 2"/>
    <property type="match status" value="1"/>
</dbReference>
<dbReference type="Gene3D" id="2.60.220.50">
    <property type="match status" value="1"/>
</dbReference>
<dbReference type="Gene3D" id="2.10.25.10">
    <property type="entry name" value="Laminin"/>
    <property type="match status" value="7"/>
</dbReference>
<dbReference type="Gene3D" id="1.20.1070.10">
    <property type="entry name" value="Rhodopsin 7-helix transmembrane proteins"/>
    <property type="match status" value="1"/>
</dbReference>
<dbReference type="InterPro" id="IPR001881">
    <property type="entry name" value="EGF-like_Ca-bd_dom"/>
</dbReference>
<dbReference type="InterPro" id="IPR000742">
    <property type="entry name" value="EGF-like_dom"/>
</dbReference>
<dbReference type="InterPro" id="IPR000152">
    <property type="entry name" value="EGF-type_Asp/Asn_hydroxyl_site"/>
</dbReference>
<dbReference type="InterPro" id="IPR018097">
    <property type="entry name" value="EGF_Ca-bd_CS"/>
</dbReference>
<dbReference type="InterPro" id="IPR057244">
    <property type="entry name" value="GAIN_B"/>
</dbReference>
<dbReference type="InterPro" id="IPR046338">
    <property type="entry name" value="GAIN_dom_sf"/>
</dbReference>
<dbReference type="InterPro" id="IPR017981">
    <property type="entry name" value="GPCR_2-like_7TM"/>
</dbReference>
<dbReference type="InterPro" id="IPR001740">
    <property type="entry name" value="GPCR_2_EMR1-like_rcpt"/>
</dbReference>
<dbReference type="InterPro" id="IPR000832">
    <property type="entry name" value="GPCR_2_secretin-like"/>
</dbReference>
<dbReference type="InterPro" id="IPR017983">
    <property type="entry name" value="GPCR_2_secretin-like_CS"/>
</dbReference>
<dbReference type="InterPro" id="IPR000203">
    <property type="entry name" value="GPS"/>
</dbReference>
<dbReference type="InterPro" id="IPR009030">
    <property type="entry name" value="Growth_fac_rcpt_cys_sf"/>
</dbReference>
<dbReference type="InterPro" id="IPR049883">
    <property type="entry name" value="NOTCH1_EGF-like"/>
</dbReference>
<dbReference type="PANTHER" id="PTHR12011:SF449">
    <property type="entry name" value="ADHESION G PROTEIN-COUPLED RECEPTOR E1"/>
    <property type="match status" value="1"/>
</dbReference>
<dbReference type="PANTHER" id="PTHR12011">
    <property type="entry name" value="ADHESION G-PROTEIN COUPLED RECEPTOR"/>
    <property type="match status" value="1"/>
</dbReference>
<dbReference type="Pfam" id="PF00002">
    <property type="entry name" value="7tm_2"/>
    <property type="match status" value="1"/>
</dbReference>
<dbReference type="Pfam" id="PF07645">
    <property type="entry name" value="EGF_CA"/>
    <property type="match status" value="7"/>
</dbReference>
<dbReference type="Pfam" id="PF01825">
    <property type="entry name" value="GPS"/>
    <property type="match status" value="1"/>
</dbReference>
<dbReference type="PRINTS" id="PR01128">
    <property type="entry name" value="EMR1HORMONER"/>
</dbReference>
<dbReference type="PRINTS" id="PR00249">
    <property type="entry name" value="GPCRSECRETIN"/>
</dbReference>
<dbReference type="SMART" id="SM00181">
    <property type="entry name" value="EGF"/>
    <property type="match status" value="7"/>
</dbReference>
<dbReference type="SMART" id="SM00179">
    <property type="entry name" value="EGF_CA"/>
    <property type="match status" value="7"/>
</dbReference>
<dbReference type="SMART" id="SM00303">
    <property type="entry name" value="GPS"/>
    <property type="match status" value="1"/>
</dbReference>
<dbReference type="SUPFAM" id="SSF57196">
    <property type="entry name" value="EGF/Laminin"/>
    <property type="match status" value="2"/>
</dbReference>
<dbReference type="SUPFAM" id="SSF81321">
    <property type="entry name" value="Family A G protein-coupled receptor-like"/>
    <property type="match status" value="1"/>
</dbReference>
<dbReference type="SUPFAM" id="SSF57184">
    <property type="entry name" value="Growth factor receptor domain"/>
    <property type="match status" value="2"/>
</dbReference>
<dbReference type="PROSITE" id="PS00010">
    <property type="entry name" value="ASX_HYDROXYL"/>
    <property type="match status" value="6"/>
</dbReference>
<dbReference type="PROSITE" id="PS01186">
    <property type="entry name" value="EGF_2"/>
    <property type="match status" value="1"/>
</dbReference>
<dbReference type="PROSITE" id="PS50026">
    <property type="entry name" value="EGF_3"/>
    <property type="match status" value="7"/>
</dbReference>
<dbReference type="PROSITE" id="PS01187">
    <property type="entry name" value="EGF_CA"/>
    <property type="match status" value="5"/>
</dbReference>
<dbReference type="PROSITE" id="PS00650">
    <property type="entry name" value="G_PROTEIN_RECEP_F2_2"/>
    <property type="match status" value="1"/>
</dbReference>
<dbReference type="PROSITE" id="PS50261">
    <property type="entry name" value="G_PROTEIN_RECEP_F2_4"/>
    <property type="match status" value="1"/>
</dbReference>
<dbReference type="PROSITE" id="PS50221">
    <property type="entry name" value="GAIN_B"/>
    <property type="match status" value="1"/>
</dbReference>
<sequence>MWGFWLLLFWGFSGMYRWGMTTLPTLGQTLGGVNECQDTTTCPAYATCTDTTDSYYCTCKRGFLSSNGQTNFQGPGVECQDVNECLQSDSPCGPNSVCTNILGRAKCSCLRGFSSSTGKDWILGSLDNFLCADVDECLTIGICPKYSNCSNSVGSYSCTCQPGFVLNGSICEDEDECVTRDVCPEHATCHNTLGSYYCTCNSGLESSGGGPMFQGLDESCEDVDECSRNSTLCGPTFICINTLGSYSCSCPAGFSLPTFQILGHPADGNCTDIDECDDTCPLNSSCTNTIGSYFCTCHPGFASSNGQLNFKDLEVTCEDIDECTQDPLQCGLNSVCTNVPGSYICGCLPDFQMDPEGSQGYGNFNCKRILFKCKEDLILQSEQIQQCQAVQGRDLGYASFCTLVNATFTILDNTCENKSAPVSLQSAATSVSLVLEQATTWFELSKEETSTLGTILLETVESTMLAALLIPSGNASQMIQTEYLDIESKVINEECKENESINLAARGDKMNVGCFIIKESVSTGAPGVAFVSFAHMESVLNERFFEDGQSFRKLRMNSRVVGGTVTGEKKEDFSKPIIYTLQHIQPKQKSERPICVSWNTDVEDGRWTPSGCEIVEASETHTVCSCNRMANLAIIMASGELTMEFSLYIISHVGTVISLVCLALAIATFLLCRAVQNHNTYMHLHLCVCLFLAKILFLTGIDKTDNQTACAIIAGFLHYLFLACFFWMLVEAVMLFLMVRNLKVVNYFSSRNIKMLHLCAFGYGLPVLVVIISASVQPRGYGMHNRCWLNTETGFIWSFLGPVCMIITINSVLLAWTLWVLRQKLCSVSSEVSKLKDTRLLTFKAIAQIFILGCSWVLGIFQIGPLASIMAYLFTIINSLQGAFIFLIHCLLNRQVRDEYKKLLTRKTDLSSHSQTSGILLSSMPSTSKMG</sequence>
<keyword id="KW-1064">Adaptive immunity</keyword>
<keyword id="KW-0106">Calcium</keyword>
<keyword id="KW-1003">Cell membrane</keyword>
<keyword id="KW-1015">Disulfide bond</keyword>
<keyword id="KW-0245">EGF-like domain</keyword>
<keyword id="KW-0297">G-protein coupled receptor</keyword>
<keyword id="KW-0325">Glycoprotein</keyword>
<keyword id="KW-0391">Immunity</keyword>
<keyword id="KW-0472">Membrane</keyword>
<keyword id="KW-0675">Receptor</keyword>
<keyword id="KW-1185">Reference proteome</keyword>
<keyword id="KW-0677">Repeat</keyword>
<keyword id="KW-0732">Signal</keyword>
<keyword id="KW-0807">Transducer</keyword>
<keyword id="KW-0812">Transmembrane</keyword>
<keyword id="KW-1133">Transmembrane helix</keyword>
<accession>Q61549</accession>
<reference key="1">
    <citation type="journal article" date="1996" name="J. Biol. Chem.">
        <title>Molecular cloning of F4/80, a murine macrophage-restricted cell surface glycoprotein with homology to the G-protein-linked transmembrane 7 hormone receptor family.</title>
        <authorList>
            <person name="McKnight A.J."/>
            <person name="Macfarlane A.J."/>
            <person name="Dri P."/>
            <person name="Turley L."/>
            <person name="Willis A.C."/>
            <person name="Gordon S."/>
        </authorList>
    </citation>
    <scope>NUCLEOTIDE SEQUENCE [MRNA]</scope>
    <scope>TISSUE SPECIFICITY</scope>
    <source>
        <strain>BALB/cJ</strain>
        <tissue>Peritoneal cavity</tissue>
    </source>
</reference>
<reference key="2">
    <citation type="journal article" date="1997" name="Genomics">
        <title>Identification and characterization of a seven transmembrane hormone receptor using differential display.</title>
        <authorList>
            <person name="Lin H.H."/>
            <person name="Stubbs L.J."/>
            <person name="Mucenski M.L."/>
        </authorList>
    </citation>
    <scope>NUCLEOTIDE SEQUENCE [MRNA]</scope>
</reference>
<reference key="3">
    <citation type="journal article" date="2004" name="Genome Res.">
        <title>The status, quality, and expansion of the NIH full-length cDNA project: the Mammalian Gene Collection (MGC).</title>
        <authorList>
            <consortium name="The MGC Project Team"/>
        </authorList>
    </citation>
    <scope>NUCLEOTIDE SEQUENCE [LARGE SCALE MRNA]</scope>
    <source>
        <strain>C57BL/6J</strain>
        <tissue>Eye</tissue>
    </source>
</reference>
<reference key="4">
    <citation type="journal article" date="2005" name="J. Exp. Med.">
        <title>The macrophage F4/80 receptor is required for the induction of antigen-specific efferent regulatory T cells in peripheral tolerance.</title>
        <authorList>
            <person name="Lin H.H."/>
            <person name="Faunce D.E."/>
            <person name="Stacey M."/>
            <person name="Terajewicz A."/>
            <person name="Nakamura T."/>
            <person name="Zhang-Hoover J."/>
            <person name="Kerley M."/>
            <person name="Mucenski M.L."/>
            <person name="Gordon S."/>
            <person name="Stein-Streilein J."/>
        </authorList>
    </citation>
    <scope>DISRUPTION PHENOTYPE</scope>
    <scope>FUNCTION</scope>
</reference>
<reference key="5">
    <citation type="journal article" date="2010" name="Cell">
        <title>A tissue-specific atlas of mouse protein phosphorylation and expression.</title>
        <authorList>
            <person name="Huttlin E.L."/>
            <person name="Jedrychowski M.P."/>
            <person name="Elias J.E."/>
            <person name="Goswami T."/>
            <person name="Rad R."/>
            <person name="Beausoleil S.A."/>
            <person name="Villen J."/>
            <person name="Haas W."/>
            <person name="Sowa M.E."/>
            <person name="Gygi S.P."/>
        </authorList>
    </citation>
    <scope>IDENTIFICATION BY MASS SPECTROMETRY [LARGE SCALE ANALYSIS]</scope>
    <source>
        <tissue>Liver</tissue>
        <tissue>Spleen</tissue>
    </source>
</reference>
<proteinExistence type="evidence at protein level"/>
<comment type="function">
    <text evidence="5">Orphan receptor involved in cell adhesion and probably in cell-cell interactions specifically involving cells of the immune system. May play a role in regulatory T-cells (Treg) development.</text>
</comment>
<comment type="subcellular location">
    <subcellularLocation>
        <location evidence="1">Cell membrane</location>
        <topology evidence="2">Multi-pass membrane protein</topology>
    </subcellularLocation>
</comment>
<comment type="tissue specificity">
    <text>In macrophages; but absent from those which are localized within T-cell areas of lymph nodes and spleen. Low level of expression on blood monocytes.</text>
</comment>
<comment type="disruption phenotype">
    <text evidence="5">Deficient mice fail to develop peripheral tolerance after inoculation with antigen because of a lack of efferent regulatory T-cell development.</text>
</comment>
<comment type="miscellaneous">
    <text evidence="1">Most adhesion GPCRs proteins undergo autoproteolysis at the GPS region of the GAIN-B domain. ADGRE1 is predicted non-cleavable because of the lack of a consensus catalytic triad sequence within GPS region.</text>
</comment>
<comment type="similarity">
    <text evidence="6">Belongs to the G-protein coupled receptor 2 family. Adhesion G-protein coupled receptor (ADGR) subfamily.</text>
</comment>
<evidence type="ECO:0000250" key="1">
    <source>
        <dbReference type="UniProtKB" id="Q14246"/>
    </source>
</evidence>
<evidence type="ECO:0000255" key="2"/>
<evidence type="ECO:0000255" key="3">
    <source>
        <dbReference type="PROSITE-ProRule" id="PRU00076"/>
    </source>
</evidence>
<evidence type="ECO:0000255" key="4">
    <source>
        <dbReference type="PROSITE-ProRule" id="PRU00098"/>
    </source>
</evidence>
<evidence type="ECO:0000269" key="5">
    <source>
    </source>
</evidence>
<evidence type="ECO:0000305" key="6"/>
<name>AGRE1_MOUSE</name>